<gene>
    <name evidence="5" type="primary">atnJ</name>
    <name type="ORF">ANIA_07876</name>
</gene>
<feature type="chain" id="PRO_0000444132" description="Aminotransferase atnJ">
    <location>
        <begin position="1"/>
        <end position="348"/>
    </location>
</feature>
<feature type="binding site" evidence="1">
    <location>
        <position position="79"/>
    </location>
    <ligand>
        <name>pyridoxal 5'-phosphate</name>
        <dbReference type="ChEBI" id="CHEBI:597326"/>
    </ligand>
</feature>
<feature type="binding site" evidence="1">
    <location>
        <position position="216"/>
    </location>
    <ligand>
        <name>pyridoxal 5'-phosphate</name>
        <dbReference type="ChEBI" id="CHEBI:597326"/>
    </ligand>
</feature>
<feature type="modified residue" description="N6-(pyridoxal phosphate)lysine" evidence="1">
    <location>
        <position position="180"/>
    </location>
</feature>
<name>ATNJ_EMENI</name>
<sequence>MSTFPAEPRSDIVNGHVESDFNYQTGTWSEPVFVQDHYLKVHGLAPGLNYGQQVFEGMKAYRDPNGQIQIFRPTDHALRMQRSCDAVSIPSIPESLFWASVNLAVAKNSEFVPPHASEAAMYIRPLAFGSGGWMPVAAGPQYKFVVYALPFCAYHGTLPVDAVVLEELDRAAPLGVGNVKVGGNYAPVLKWSDKARKEGFGITLHLDSKTRGEIDEFSTSGFVGIKYTESGGEKGYTLVVPNSQCIIKSVTSTSVVEVARSLGWRVEVRPIPYDELEFFDEVLAVGTAAMITSIRSITHRSKDQVFRYKTSDEPGSACEKLSRHLKGIQKGDEKDTFGWLKRVEEVTV</sequence>
<comment type="function">
    <text evidence="2 3 4">Aminotransferase; part of the gene cluster that mediates the biosynthesis of aspercryptins, linear lipopeptides built from six amino acids including 2 highly unusual and nonproteogenic amino acids, 2-amino-octanoic acid (2aoa) and 2-amino-dodecanol (2adol) (PubMed:23248299, PubMed:26563584, PubMed:27310134). The core structure of aspercryptins is as follows: Ser/Ala-Thr-Ile/Val-2aoa-Asn-2adol (PubMed:27310134). The first step of aspercryptin biosynthesis is the generation of the fatty acid precursors, octanoic and dodecanoic acids, by the FAS subunits atnF and atnM (PubMed:26563584, PubMed:27310134). The fatty acid precursors are likely transformed into the corresponding alpha-amino fatty acids in three steps (PubMed:26563584, PubMed:27310134). First, they are hydroxylated by the cytochrome P450 monooxygenase atnE, then oxidized to the corresponding alpha-keto acids by the NAD(P)-dependent oxidoreductase atnD, and finally converted to the alpha-amino fatty acids by the PLP-dependent aminotransferases atnH or atnJ (PubMed:26563584, PubMed:27310134). the alpha-amino fatty acids, 2-amino-octanoic and 2-amino-dodecanoic acids, are recognized, activated, and covalently tethered to the NRPS atnA by its fourth and sixth adenylation domains (PubMed:27310134). The second module of atnA is the Thr module and contains an epimerase (E) domain responsible for the epimerization of Thr to D-allo-Thr (PubMed:26563584). Additionally, despite atnA having only one epimerase domain, the first amino acid of aspercryptin A1 is D-Ser, suggesting that serine is either loaded directly as D-Ser on the first module or that the epimerase domain in the threonine module epimerizes both L-Ser and L-Thr (PubMed:27310134). After condensation of the hexapeptide of aspercryptin, the C-terminal reductase (TE) domain might be involved in the reductive release and production of the aldehyde hexapeptide (PubMed:26563584). Further reduction would generate aspercryptins (PubMed:26563584, PubMed:27310134). The variety of aspercryptins produced reflects the flexibility of the atnA NRPS, allowing incorporation of alanine instead of serine, valine for isoleucine, and a C10 fatty amino alcohol instead of the C12 version (PubMed:27310134). AtnB seems to be involved in the selectivity for Ile versus Val by the third module (PubMed:26563584). Moreover, type B, C and D aspercryptins have an additional N-terminal cichorine, acetyl and propionyl group respectively (PubMed:27310134).</text>
</comment>
<comment type="cofactor">
    <cofactor evidence="1">
        <name>pyridoxal 5'-phosphate</name>
        <dbReference type="ChEBI" id="CHEBI:597326"/>
    </cofactor>
</comment>
<comment type="pathway">
    <text evidence="3">Secondary metabolite biosynthesis.</text>
</comment>
<comment type="induction">
    <text evidence="4">Expression is positively regulated by the aspercryptin cluser-specific transcription factor atnN (PubMed:27310134).</text>
</comment>
<comment type="disruption phenotype">
    <text evidence="3">Eliminates approximately 70% of aspercryptin production (PubMed:26563584).</text>
</comment>
<comment type="similarity">
    <text evidence="6">Belongs to the class-IV pyridoxal-phosphate-dependent aminotransferase family.</text>
</comment>
<accession>Q5AV04</accession>
<accession>A0A1U8QXP8</accession>
<accession>C8V3Y1</accession>
<protein>
    <recommendedName>
        <fullName evidence="5">Aminotransferase atnJ</fullName>
        <ecNumber evidence="7">2.6.1.-</ecNumber>
    </recommendedName>
    <alternativeName>
        <fullName evidence="5">Aspercryptin biosynthesis cluster protein J</fullName>
    </alternativeName>
</protein>
<reference key="1">
    <citation type="journal article" date="2005" name="Nature">
        <title>Sequencing of Aspergillus nidulans and comparative analysis with A. fumigatus and A. oryzae.</title>
        <authorList>
            <person name="Galagan J.E."/>
            <person name="Calvo S.E."/>
            <person name="Cuomo C."/>
            <person name="Ma L.-J."/>
            <person name="Wortman J.R."/>
            <person name="Batzoglou S."/>
            <person name="Lee S.-I."/>
            <person name="Bastuerkmen M."/>
            <person name="Spevak C.C."/>
            <person name="Clutterbuck J."/>
            <person name="Kapitonov V."/>
            <person name="Jurka J."/>
            <person name="Scazzocchio C."/>
            <person name="Farman M.L."/>
            <person name="Butler J."/>
            <person name="Purcell S."/>
            <person name="Harris S."/>
            <person name="Braus G.H."/>
            <person name="Draht O."/>
            <person name="Busch S."/>
            <person name="D'Enfert C."/>
            <person name="Bouchier C."/>
            <person name="Goldman G.H."/>
            <person name="Bell-Pedersen D."/>
            <person name="Griffiths-Jones S."/>
            <person name="Doonan J.H."/>
            <person name="Yu J."/>
            <person name="Vienken K."/>
            <person name="Pain A."/>
            <person name="Freitag M."/>
            <person name="Selker E.U."/>
            <person name="Archer D.B."/>
            <person name="Penalva M.A."/>
            <person name="Oakley B.R."/>
            <person name="Momany M."/>
            <person name="Tanaka T."/>
            <person name="Kumagai T."/>
            <person name="Asai K."/>
            <person name="Machida M."/>
            <person name="Nierman W.C."/>
            <person name="Denning D.W."/>
            <person name="Caddick M.X."/>
            <person name="Hynes M."/>
            <person name="Paoletti M."/>
            <person name="Fischer R."/>
            <person name="Miller B.L."/>
            <person name="Dyer P.S."/>
            <person name="Sachs M.S."/>
            <person name="Osmani S.A."/>
            <person name="Birren B.W."/>
        </authorList>
    </citation>
    <scope>NUCLEOTIDE SEQUENCE [LARGE SCALE GENOMIC DNA]</scope>
    <source>
        <strain>FGSC A4 / ATCC 38163 / CBS 112.46 / NRRL 194 / M139</strain>
    </source>
</reference>
<reference key="2">
    <citation type="journal article" date="2009" name="Fungal Genet. Biol.">
        <title>The 2008 update of the Aspergillus nidulans genome annotation: a community effort.</title>
        <authorList>
            <person name="Wortman J.R."/>
            <person name="Gilsenan J.M."/>
            <person name="Joardar V."/>
            <person name="Deegan J."/>
            <person name="Clutterbuck J."/>
            <person name="Andersen M.R."/>
            <person name="Archer D."/>
            <person name="Bencina M."/>
            <person name="Braus G."/>
            <person name="Coutinho P."/>
            <person name="von Dohren H."/>
            <person name="Doonan J."/>
            <person name="Driessen A.J."/>
            <person name="Durek P."/>
            <person name="Espeso E."/>
            <person name="Fekete E."/>
            <person name="Flipphi M."/>
            <person name="Estrada C.G."/>
            <person name="Geysens S."/>
            <person name="Goldman G."/>
            <person name="de Groot P.W."/>
            <person name="Hansen K."/>
            <person name="Harris S.D."/>
            <person name="Heinekamp T."/>
            <person name="Helmstaedt K."/>
            <person name="Henrissat B."/>
            <person name="Hofmann G."/>
            <person name="Homan T."/>
            <person name="Horio T."/>
            <person name="Horiuchi H."/>
            <person name="James S."/>
            <person name="Jones M."/>
            <person name="Karaffa L."/>
            <person name="Karanyi Z."/>
            <person name="Kato M."/>
            <person name="Keller N."/>
            <person name="Kelly D.E."/>
            <person name="Kiel J.A."/>
            <person name="Kim J.M."/>
            <person name="van der Klei I.J."/>
            <person name="Klis F.M."/>
            <person name="Kovalchuk A."/>
            <person name="Krasevec N."/>
            <person name="Kubicek C.P."/>
            <person name="Liu B."/>
            <person name="Maccabe A."/>
            <person name="Meyer V."/>
            <person name="Mirabito P."/>
            <person name="Miskei M."/>
            <person name="Mos M."/>
            <person name="Mullins J."/>
            <person name="Nelson D.R."/>
            <person name="Nielsen J."/>
            <person name="Oakley B.R."/>
            <person name="Osmani S.A."/>
            <person name="Pakula T."/>
            <person name="Paszewski A."/>
            <person name="Paulsen I."/>
            <person name="Pilsyk S."/>
            <person name="Pocsi I."/>
            <person name="Punt P.J."/>
            <person name="Ram A.F."/>
            <person name="Ren Q."/>
            <person name="Robellet X."/>
            <person name="Robson G."/>
            <person name="Seiboth B."/>
            <person name="van Solingen P."/>
            <person name="Specht T."/>
            <person name="Sun J."/>
            <person name="Taheri-Talesh N."/>
            <person name="Takeshita N."/>
            <person name="Ussery D."/>
            <person name="vanKuyk P.A."/>
            <person name="Visser H."/>
            <person name="van de Vondervoort P.J."/>
            <person name="de Vries R.P."/>
            <person name="Walton J."/>
            <person name="Xiang X."/>
            <person name="Xiong Y."/>
            <person name="Zeng A.P."/>
            <person name="Brandt B.W."/>
            <person name="Cornell M.J."/>
            <person name="van den Hondel C.A."/>
            <person name="Visser J."/>
            <person name="Oliver S.G."/>
            <person name="Turner G."/>
        </authorList>
    </citation>
    <scope>GENOME REANNOTATION</scope>
    <source>
        <strain>FGSC A4 / ATCC 38163 / CBS 112.46 / NRRL 194 / M139</strain>
    </source>
</reference>
<reference key="3">
    <citation type="journal article" date="2013" name="Proc. Natl. Acad. Sci. U.S.A.">
        <title>Accurate prediction of secondary metabolite gene clusters in filamentous fungi.</title>
        <authorList>
            <person name="Andersen M.R."/>
            <person name="Nielsen J.B."/>
            <person name="Klitgaard A."/>
            <person name="Petersen L.M."/>
            <person name="Zachariasen M."/>
            <person name="Hansen T.J."/>
            <person name="Blicher L.H."/>
            <person name="Gotfredsen C.H."/>
            <person name="Larsen T.O."/>
            <person name="Nielsen K.F."/>
            <person name="Mortensen U.H."/>
        </authorList>
    </citation>
    <scope>IDENTIFICATION OF THE CLUSTER</scope>
</reference>
<reference key="4">
    <citation type="journal article" date="2016" name="ACS Chem. Biol.">
        <title>New aspercryptins, lipopeptide natural products, revealed by HDAC inhibition in Aspergillus nidulans.</title>
        <authorList>
            <person name="Henke M.T."/>
            <person name="Soukup A.A."/>
            <person name="Goering A.W."/>
            <person name="McClure R.A."/>
            <person name="Thomson R.J."/>
            <person name="Keller N.P."/>
            <person name="Kelleher N.L."/>
        </authorList>
    </citation>
    <scope>FUNCTION</scope>
    <scope>INDUCTION</scope>
</reference>
<reference key="5">
    <citation type="journal article" date="2016" name="Angew. Chem. Int. Ed.">
        <title>Development of genetic dereplication strains in Aspergillus nidulans results in the discovery of aspercryptin.</title>
        <authorList>
            <person name="Chiang Y.M."/>
            <person name="Ahuja M."/>
            <person name="Oakley C.E."/>
            <person name="Entwistle R."/>
            <person name="Asokan A."/>
            <person name="Zutz C."/>
            <person name="Wang C.C."/>
            <person name="Oakley B.R."/>
        </authorList>
    </citation>
    <scope>FUNCTION</scope>
    <scope>DISRUPTION PHENOTYPE</scope>
    <scope>PATHWAY</scope>
</reference>
<evidence type="ECO:0000250" key="1">
    <source>
        <dbReference type="UniProtKB" id="P19938"/>
    </source>
</evidence>
<evidence type="ECO:0000269" key="2">
    <source>
    </source>
</evidence>
<evidence type="ECO:0000269" key="3">
    <source>
    </source>
</evidence>
<evidence type="ECO:0000269" key="4">
    <source>
    </source>
</evidence>
<evidence type="ECO:0000303" key="5">
    <source>
    </source>
</evidence>
<evidence type="ECO:0000305" key="6"/>
<evidence type="ECO:0000305" key="7">
    <source>
    </source>
</evidence>
<organism>
    <name type="scientific">Emericella nidulans (strain FGSC A4 / ATCC 38163 / CBS 112.46 / NRRL 194 / M139)</name>
    <name type="common">Aspergillus nidulans</name>
    <dbReference type="NCBI Taxonomy" id="227321"/>
    <lineage>
        <taxon>Eukaryota</taxon>
        <taxon>Fungi</taxon>
        <taxon>Dikarya</taxon>
        <taxon>Ascomycota</taxon>
        <taxon>Pezizomycotina</taxon>
        <taxon>Eurotiomycetes</taxon>
        <taxon>Eurotiomycetidae</taxon>
        <taxon>Eurotiales</taxon>
        <taxon>Aspergillaceae</taxon>
        <taxon>Aspergillus</taxon>
        <taxon>Aspergillus subgen. Nidulantes</taxon>
    </lineage>
</organism>
<dbReference type="EC" id="2.6.1.-" evidence="7"/>
<dbReference type="EMBL" id="BN001302">
    <property type="protein sequence ID" value="CBF73436.1"/>
    <property type="molecule type" value="Genomic_DNA"/>
</dbReference>
<dbReference type="EMBL" id="AACD01000135">
    <property type="protein sequence ID" value="EAA59530.1"/>
    <property type="molecule type" value="Genomic_DNA"/>
</dbReference>
<dbReference type="RefSeq" id="XP_681145.1">
    <property type="nucleotide sequence ID" value="XM_676053.1"/>
</dbReference>
<dbReference type="SMR" id="Q5AV04"/>
<dbReference type="STRING" id="227321.Q5AV04"/>
<dbReference type="EnsemblFungi" id="CBF73436">
    <property type="protein sequence ID" value="CBF73436"/>
    <property type="gene ID" value="ANIA_07876"/>
</dbReference>
<dbReference type="GeneID" id="2869017"/>
<dbReference type="KEGG" id="ani:ANIA_07876"/>
<dbReference type="eggNOG" id="KOG0975">
    <property type="taxonomic scope" value="Eukaryota"/>
</dbReference>
<dbReference type="HOGENOM" id="CLU_031922_1_0_1"/>
<dbReference type="InParanoid" id="Q5AV04"/>
<dbReference type="OMA" id="LKWSDQA"/>
<dbReference type="OrthoDB" id="409992at2759"/>
<dbReference type="Proteomes" id="UP000000560">
    <property type="component" value="Chromosome II"/>
</dbReference>
<dbReference type="GO" id="GO:0004084">
    <property type="term" value="F:branched-chain-amino-acid transaminase activity"/>
    <property type="evidence" value="ECO:0000318"/>
    <property type="project" value="GO_Central"/>
</dbReference>
<dbReference type="GO" id="GO:0009081">
    <property type="term" value="P:branched-chain amino acid metabolic process"/>
    <property type="evidence" value="ECO:0007669"/>
    <property type="project" value="InterPro"/>
</dbReference>
<dbReference type="CDD" id="cd01557">
    <property type="entry name" value="BCAT_beta_family"/>
    <property type="match status" value="1"/>
</dbReference>
<dbReference type="FunFam" id="3.20.10.10:FF:000010">
    <property type="entry name" value="Branched-chain amino acid aminotransferase"/>
    <property type="match status" value="1"/>
</dbReference>
<dbReference type="Gene3D" id="3.30.470.10">
    <property type="match status" value="1"/>
</dbReference>
<dbReference type="Gene3D" id="3.20.10.10">
    <property type="entry name" value="D-amino Acid Aminotransferase, subunit A, domain 2"/>
    <property type="match status" value="1"/>
</dbReference>
<dbReference type="InterPro" id="IPR001544">
    <property type="entry name" value="Aminotrans_IV"/>
</dbReference>
<dbReference type="InterPro" id="IPR036038">
    <property type="entry name" value="Aminotransferase-like"/>
</dbReference>
<dbReference type="InterPro" id="IPR005786">
    <property type="entry name" value="B_amino_transII"/>
</dbReference>
<dbReference type="InterPro" id="IPR043132">
    <property type="entry name" value="BCAT-like_C"/>
</dbReference>
<dbReference type="InterPro" id="IPR043131">
    <property type="entry name" value="BCAT-like_N"/>
</dbReference>
<dbReference type="InterPro" id="IPR033939">
    <property type="entry name" value="BCAT_family"/>
</dbReference>
<dbReference type="PANTHER" id="PTHR42825">
    <property type="entry name" value="AMINO ACID AMINOTRANSFERASE"/>
    <property type="match status" value="1"/>
</dbReference>
<dbReference type="PANTHER" id="PTHR42825:SF2">
    <property type="entry name" value="BRANCHED-CHAIN-AMINO-ACID AMINOTRANSFERASE 3, CHLOROPLASTIC-RELATED"/>
    <property type="match status" value="1"/>
</dbReference>
<dbReference type="Pfam" id="PF01063">
    <property type="entry name" value="Aminotran_4"/>
    <property type="match status" value="1"/>
</dbReference>
<dbReference type="PIRSF" id="PIRSF006468">
    <property type="entry name" value="BCAT1"/>
    <property type="match status" value="1"/>
</dbReference>
<dbReference type="SUPFAM" id="SSF56752">
    <property type="entry name" value="D-aminoacid aminotransferase-like PLP-dependent enzymes"/>
    <property type="match status" value="1"/>
</dbReference>
<proteinExistence type="evidence at transcript level"/>
<keyword id="KW-0032">Aminotransferase</keyword>
<keyword id="KW-0663">Pyridoxal phosphate</keyword>
<keyword id="KW-1185">Reference proteome</keyword>
<keyword id="KW-0808">Transferase</keyword>